<gene>
    <name evidence="2" type="primary">slc35a4</name>
</gene>
<organism>
    <name type="scientific">Xenopus tropicalis</name>
    <name type="common">Western clawed frog</name>
    <name type="synonym">Silurana tropicalis</name>
    <dbReference type="NCBI Taxonomy" id="8364"/>
    <lineage>
        <taxon>Eukaryota</taxon>
        <taxon>Metazoa</taxon>
        <taxon>Chordata</taxon>
        <taxon>Craniata</taxon>
        <taxon>Vertebrata</taxon>
        <taxon>Euteleostomi</taxon>
        <taxon>Amphibia</taxon>
        <taxon>Batrachia</taxon>
        <taxon>Anura</taxon>
        <taxon>Pipoidea</taxon>
        <taxon>Pipidae</taxon>
        <taxon>Xenopodinae</taxon>
        <taxon>Xenopus</taxon>
        <taxon>Silurana</taxon>
    </lineage>
</organism>
<name>S35A4_XENTR</name>
<dbReference type="EMBL" id="BC135720">
    <property type="protein sequence ID" value="AAI35721.1"/>
    <property type="molecule type" value="mRNA"/>
</dbReference>
<dbReference type="RefSeq" id="NP_001096322.1">
    <property type="nucleotide sequence ID" value="NM_001102852.1"/>
</dbReference>
<dbReference type="SMR" id="A4IHW3"/>
<dbReference type="FunCoup" id="A4IHW3">
    <property type="interactions" value="510"/>
</dbReference>
<dbReference type="PaxDb" id="8364-ENSXETP00000054304"/>
<dbReference type="DNASU" id="100124906"/>
<dbReference type="GeneID" id="100124906"/>
<dbReference type="KEGG" id="xtr:100124906"/>
<dbReference type="AGR" id="Xenbase:XB-GENE-958297"/>
<dbReference type="CTD" id="113829"/>
<dbReference type="Xenbase" id="XB-GENE-958297">
    <property type="gene designation" value="slc35a4"/>
</dbReference>
<dbReference type="eggNOG" id="KOG2234">
    <property type="taxonomic scope" value="Eukaryota"/>
</dbReference>
<dbReference type="InParanoid" id="A4IHW3"/>
<dbReference type="OMA" id="SSCVVMI"/>
<dbReference type="OrthoDB" id="419167at2759"/>
<dbReference type="Proteomes" id="UP000008143">
    <property type="component" value="Chromosome 3"/>
</dbReference>
<dbReference type="GO" id="GO:0005794">
    <property type="term" value="C:Golgi apparatus"/>
    <property type="evidence" value="ECO:0000250"/>
    <property type="project" value="UniProtKB"/>
</dbReference>
<dbReference type="GO" id="GO:0000139">
    <property type="term" value="C:Golgi membrane"/>
    <property type="evidence" value="ECO:0000250"/>
    <property type="project" value="UniProtKB"/>
</dbReference>
<dbReference type="GO" id="GO:0015165">
    <property type="term" value="F:pyrimidine nucleotide-sugar transmembrane transporter activity"/>
    <property type="evidence" value="ECO:0007669"/>
    <property type="project" value="InterPro"/>
</dbReference>
<dbReference type="InterPro" id="IPR007271">
    <property type="entry name" value="Nuc_sug_transpt"/>
</dbReference>
<dbReference type="NCBIfam" id="TIGR00803">
    <property type="entry name" value="nst"/>
    <property type="match status" value="1"/>
</dbReference>
<dbReference type="PANTHER" id="PTHR10231">
    <property type="entry name" value="NUCLEOTIDE-SUGAR TRANSMEMBRANE TRANSPORTER"/>
    <property type="match status" value="1"/>
</dbReference>
<dbReference type="Pfam" id="PF04142">
    <property type="entry name" value="Nuc_sug_transp"/>
    <property type="match status" value="1"/>
</dbReference>
<dbReference type="PIRSF" id="PIRSF005799">
    <property type="entry name" value="UDP-gal_transpt"/>
    <property type="match status" value="1"/>
</dbReference>
<dbReference type="SUPFAM" id="SSF103481">
    <property type="entry name" value="Multidrug resistance efflux transporter EmrE"/>
    <property type="match status" value="1"/>
</dbReference>
<comment type="function">
    <text evidence="2">Mediates the transport of CDP-ribitol (By similarity). Does not exhibit CMP-sialic acid, UDP-galactose and UDP-N-acetylglucosamine transport activity (By similarity).</text>
</comment>
<comment type="catalytic activity">
    <reaction evidence="2">
        <text>CDP-L-ribitol(in) + CDP(out) = CDP-L-ribitol(out) + CDP(in)</text>
        <dbReference type="Rhea" id="RHEA:71579"/>
        <dbReference type="ChEBI" id="CHEBI:57608"/>
        <dbReference type="ChEBI" id="CHEBI:58069"/>
    </reaction>
</comment>
<comment type="subcellular location">
    <subcellularLocation>
        <location evidence="1">Golgi apparatus membrane</location>
        <topology evidence="3">Multi-pass membrane protein</topology>
    </subcellularLocation>
</comment>
<comment type="similarity">
    <text evidence="4">Belongs to the nucleotide-sugar transporter family. SLC35A subfamily.</text>
</comment>
<sequence length="321" mass="36033">MYSVNIEPDGSNHSPSRKRLKQILWGLMLVLSVTIYGSHAPLIYLCKVNGEIPFSSSAVVLLIELSKFVISLVFFLIQDWKSLKASVSWHLAAPYAVPAVLYGANNNLVVYIQHFMDPSSFQVLSNLKIVSTAVLYSLFLRQRLSVRRWLSVFLLLAAGVFYSYGGIQDLEKVSSDTNLYVTLPGLLLMLAYCLISGLSAVYTEMTLKTQKIPLNMQNLYLYSFGIIINLTAHLTSSKNSDFFDGFSVWVWVIILSQALNGLIMSLVMKLSNNITRLFIISFSMLANGFLSFILFQLQLTALFFLAVVLIGLAVYMYYGMK</sequence>
<reference key="1">
    <citation type="submission" date="2007-03" db="EMBL/GenBank/DDBJ databases">
        <authorList>
            <consortium name="NIH - Xenopus Gene Collection (XGC) project"/>
        </authorList>
    </citation>
    <scope>NUCLEOTIDE SEQUENCE [LARGE SCALE MRNA]</scope>
    <source>
        <tissue>Embryo</tissue>
    </source>
</reference>
<protein>
    <recommendedName>
        <fullName evidence="4">Probable UDP-sugar transporter protein SLC35A4</fullName>
    </recommendedName>
    <alternativeName>
        <fullName evidence="2">Solute carrier family 35 member A4</fullName>
    </alternativeName>
</protein>
<proteinExistence type="evidence at transcript level"/>
<keyword id="KW-0333">Golgi apparatus</keyword>
<keyword id="KW-0472">Membrane</keyword>
<keyword id="KW-1185">Reference proteome</keyword>
<keyword id="KW-0762">Sugar transport</keyword>
<keyword id="KW-0812">Transmembrane</keyword>
<keyword id="KW-1133">Transmembrane helix</keyword>
<keyword id="KW-0813">Transport</keyword>
<feature type="chain" id="PRO_0000337753" description="Probable UDP-sugar transporter protein SLC35A4">
    <location>
        <begin position="1"/>
        <end position="321"/>
    </location>
</feature>
<feature type="topological domain" description="Cytoplasmic" evidence="2">
    <location>
        <begin position="1"/>
        <end position="22"/>
    </location>
</feature>
<feature type="transmembrane region" description="Helical" evidence="3">
    <location>
        <begin position="23"/>
        <end position="43"/>
    </location>
</feature>
<feature type="topological domain" description="Lumenal" evidence="2">
    <location>
        <begin position="44"/>
        <end position="56"/>
    </location>
</feature>
<feature type="transmembrane region" description="Helical" evidence="3">
    <location>
        <begin position="57"/>
        <end position="77"/>
    </location>
</feature>
<feature type="topological domain" description="Cytoplasmic" evidence="2">
    <location>
        <begin position="78"/>
        <end position="91"/>
    </location>
</feature>
<feature type="transmembrane region" description="Helical" evidence="3">
    <location>
        <begin position="92"/>
        <end position="112"/>
    </location>
</feature>
<feature type="topological domain" description="Lumenal" evidence="2">
    <location>
        <begin position="113"/>
        <end position="119"/>
    </location>
</feature>
<feature type="transmembrane region" description="Helical" evidence="3">
    <location>
        <begin position="120"/>
        <end position="140"/>
    </location>
</feature>
<feature type="topological domain" description="Cytoplasmic" evidence="2">
    <location>
        <begin position="141"/>
        <end position="149"/>
    </location>
</feature>
<feature type="transmembrane region" description="Helical" evidence="3">
    <location>
        <begin position="150"/>
        <end position="170"/>
    </location>
</feature>
<feature type="topological domain" description="Lumenal" evidence="2">
    <location>
        <begin position="171"/>
        <end position="180"/>
    </location>
</feature>
<feature type="transmembrane region" description="Helical" evidence="3">
    <location>
        <begin position="181"/>
        <end position="201"/>
    </location>
</feature>
<feature type="topological domain" description="Cytoplasmic" evidence="2">
    <location>
        <begin position="202"/>
        <end position="211"/>
    </location>
</feature>
<feature type="transmembrane region" description="Helical" evidence="3">
    <location>
        <begin position="212"/>
        <end position="232"/>
    </location>
</feature>
<feature type="topological domain" description="Lumenal" evidence="2">
    <location>
        <begin position="233"/>
        <end position="247"/>
    </location>
</feature>
<feature type="transmembrane region" description="Helical" evidence="3">
    <location>
        <begin position="248"/>
        <end position="268"/>
    </location>
</feature>
<feature type="topological domain" description="Cytoplasmic" evidence="2">
    <location>
        <begin position="269"/>
        <end position="321"/>
    </location>
</feature>
<evidence type="ECO:0000250" key="1">
    <source>
        <dbReference type="UniProtKB" id="Q91ZR7"/>
    </source>
</evidence>
<evidence type="ECO:0000250" key="2">
    <source>
        <dbReference type="UniProtKB" id="Q96G79"/>
    </source>
</evidence>
<evidence type="ECO:0000255" key="3"/>
<evidence type="ECO:0000305" key="4"/>
<accession>A4IHW3</accession>